<name>OXYA_SQUAC</name>
<protein>
    <recommendedName>
        <fullName>Aspartocin</fullName>
    </recommendedName>
    <alternativeName>
        <fullName>Aspargtocin</fullName>
    </alternativeName>
</protein>
<sequence length="9" mass="996">CYINNCPLG</sequence>
<feature type="peptide" id="PRO_0000044094" description="Aspartocin">
    <location>
        <begin position="1"/>
        <end position="9"/>
    </location>
</feature>
<feature type="modified residue" description="Glycine amide" evidence="1">
    <location>
        <position position="9"/>
    </location>
</feature>
<feature type="disulfide bond">
    <location>
        <begin position="1"/>
        <end position="6"/>
    </location>
</feature>
<comment type="subcellular location">
    <subcellularLocation>
        <location>Secreted</location>
    </subcellularLocation>
</comment>
<comment type="similarity">
    <text evidence="2">Belongs to the vasopressin/oxytocin family.</text>
</comment>
<organism>
    <name type="scientific">Squalus acanthias</name>
    <name type="common">Spiny dogfish</name>
    <dbReference type="NCBI Taxonomy" id="7797"/>
    <lineage>
        <taxon>Eukaryota</taxon>
        <taxon>Metazoa</taxon>
        <taxon>Chordata</taxon>
        <taxon>Craniata</taxon>
        <taxon>Vertebrata</taxon>
        <taxon>Chondrichthyes</taxon>
        <taxon>Elasmobranchii</taxon>
        <taxon>Squalomorphii</taxon>
        <taxon>Squaliformes</taxon>
        <taxon>Squalidae</taxon>
        <taxon>Squalus</taxon>
    </lineage>
</organism>
<evidence type="ECO:0000269" key="1">
    <source>
    </source>
</evidence>
<evidence type="ECO:0000305" key="2"/>
<proteinExistence type="evidence at protein level"/>
<dbReference type="GO" id="GO:0005576">
    <property type="term" value="C:extracellular region"/>
    <property type="evidence" value="ECO:0007669"/>
    <property type="project" value="UniProtKB-SubCell"/>
</dbReference>
<dbReference type="GO" id="GO:0005185">
    <property type="term" value="F:neurohypophyseal hormone activity"/>
    <property type="evidence" value="ECO:0007669"/>
    <property type="project" value="InterPro"/>
</dbReference>
<dbReference type="InterPro" id="IPR022423">
    <property type="entry name" value="Neurohypophysial_hormone_CS"/>
</dbReference>
<dbReference type="Pfam" id="PF00220">
    <property type="entry name" value="Hormone_4"/>
    <property type="match status" value="1"/>
</dbReference>
<dbReference type="PROSITE" id="PS00264">
    <property type="entry name" value="NEUROHYPOPHYS_HORM"/>
    <property type="match status" value="1"/>
</dbReference>
<keyword id="KW-0027">Amidation</keyword>
<keyword id="KW-0903">Direct protein sequencing</keyword>
<keyword id="KW-1015">Disulfide bond</keyword>
<keyword id="KW-0372">Hormone</keyword>
<keyword id="KW-0964">Secreted</keyword>
<accession>P42999</accession>
<reference key="1">
    <citation type="journal article" date="1972" name="Eur. J. Biochem.">
        <title>Phylogeny of the neurohypophysial hormones. Two new active peptides isolated from a cartilaginous fish, Squalus acanthias.</title>
        <authorList>
            <person name="Acher R."/>
            <person name="Chauvet J."/>
            <person name="Chauvet M.-T."/>
        </authorList>
    </citation>
    <scope>PROTEIN SEQUENCE</scope>
</reference>
<reference key="2">
    <citation type="journal article" date="1972" name="C. R. Hebd. Seances Acad. Sci., D, Sci. Nat.">
        <title>Identification of 2 new neurohypophyseal hormones, valitocin (Val8-oxytocin) and aspartocin (Asn4-oxytocin) in a selachian fish, the spiny dog-fish (Squalus acanthias).</title>
        <authorList>
            <person name="Acher R."/>
            <person name="Chauvet J."/>
            <person name="Chauvet M.-T."/>
            <person name="Fontaine M."/>
        </authorList>
    </citation>
    <scope>PROTEIN SEQUENCE</scope>
    <scope>AMIDATION AT GLY-9</scope>
</reference>